<accession>C6DKR8</accession>
<gene>
    <name evidence="1" type="primary">nagZ</name>
    <name type="ordered locus">PC1_2488</name>
</gene>
<feature type="chain" id="PRO_1000205461" description="Beta-hexosaminidase">
    <location>
        <begin position="1"/>
        <end position="342"/>
    </location>
</feature>
<feature type="active site" description="Proton donor/acceptor" evidence="1">
    <location>
        <position position="176"/>
    </location>
</feature>
<feature type="active site" description="Nucleophile" evidence="1">
    <location>
        <position position="248"/>
    </location>
</feature>
<feature type="binding site" evidence="1">
    <location>
        <position position="62"/>
    </location>
    <ligand>
        <name>substrate</name>
    </ligand>
</feature>
<feature type="binding site" evidence="1">
    <location>
        <position position="70"/>
    </location>
    <ligand>
        <name>substrate</name>
    </ligand>
</feature>
<feature type="binding site" evidence="1">
    <location>
        <position position="133"/>
    </location>
    <ligand>
        <name>substrate</name>
    </ligand>
</feature>
<feature type="binding site" evidence="1">
    <location>
        <begin position="163"/>
        <end position="164"/>
    </location>
    <ligand>
        <name>substrate</name>
    </ligand>
</feature>
<feature type="site" description="Important for catalytic activity" evidence="1">
    <location>
        <position position="174"/>
    </location>
</feature>
<dbReference type="EC" id="3.2.1.52" evidence="1"/>
<dbReference type="EMBL" id="CP001657">
    <property type="protein sequence ID" value="ACT13519.1"/>
    <property type="molecule type" value="Genomic_DNA"/>
</dbReference>
<dbReference type="RefSeq" id="WP_015840699.1">
    <property type="nucleotide sequence ID" value="NC_012917.1"/>
</dbReference>
<dbReference type="SMR" id="C6DKR8"/>
<dbReference type="STRING" id="561230.PC1_2488"/>
<dbReference type="CAZy" id="GH3">
    <property type="family name" value="Glycoside Hydrolase Family 3"/>
</dbReference>
<dbReference type="KEGG" id="pct:PC1_2488"/>
<dbReference type="eggNOG" id="COG1472">
    <property type="taxonomic scope" value="Bacteria"/>
</dbReference>
<dbReference type="HOGENOM" id="CLU_008392_0_0_6"/>
<dbReference type="OrthoDB" id="9786661at2"/>
<dbReference type="UniPathway" id="UPA00544"/>
<dbReference type="Proteomes" id="UP000002736">
    <property type="component" value="Chromosome"/>
</dbReference>
<dbReference type="GO" id="GO:0005737">
    <property type="term" value="C:cytoplasm"/>
    <property type="evidence" value="ECO:0007669"/>
    <property type="project" value="UniProtKB-SubCell"/>
</dbReference>
<dbReference type="GO" id="GO:0004563">
    <property type="term" value="F:beta-N-acetylhexosaminidase activity"/>
    <property type="evidence" value="ECO:0007669"/>
    <property type="project" value="UniProtKB-UniRule"/>
</dbReference>
<dbReference type="GO" id="GO:0005975">
    <property type="term" value="P:carbohydrate metabolic process"/>
    <property type="evidence" value="ECO:0007669"/>
    <property type="project" value="InterPro"/>
</dbReference>
<dbReference type="GO" id="GO:0051301">
    <property type="term" value="P:cell division"/>
    <property type="evidence" value="ECO:0007669"/>
    <property type="project" value="UniProtKB-KW"/>
</dbReference>
<dbReference type="GO" id="GO:0071555">
    <property type="term" value="P:cell wall organization"/>
    <property type="evidence" value="ECO:0007669"/>
    <property type="project" value="UniProtKB-KW"/>
</dbReference>
<dbReference type="GO" id="GO:0009252">
    <property type="term" value="P:peptidoglycan biosynthetic process"/>
    <property type="evidence" value="ECO:0007669"/>
    <property type="project" value="UniProtKB-KW"/>
</dbReference>
<dbReference type="GO" id="GO:0009254">
    <property type="term" value="P:peptidoglycan turnover"/>
    <property type="evidence" value="ECO:0007669"/>
    <property type="project" value="UniProtKB-UniRule"/>
</dbReference>
<dbReference type="GO" id="GO:0008360">
    <property type="term" value="P:regulation of cell shape"/>
    <property type="evidence" value="ECO:0007669"/>
    <property type="project" value="UniProtKB-KW"/>
</dbReference>
<dbReference type="FunFam" id="3.20.20.300:FF:000001">
    <property type="entry name" value="Beta-hexosaminidase"/>
    <property type="match status" value="1"/>
</dbReference>
<dbReference type="Gene3D" id="3.20.20.300">
    <property type="entry name" value="Glycoside hydrolase, family 3, N-terminal domain"/>
    <property type="match status" value="1"/>
</dbReference>
<dbReference type="HAMAP" id="MF_00364">
    <property type="entry name" value="NagZ"/>
    <property type="match status" value="1"/>
</dbReference>
<dbReference type="InterPro" id="IPR022956">
    <property type="entry name" value="Beta_hexosaminidase_bac"/>
</dbReference>
<dbReference type="InterPro" id="IPR019800">
    <property type="entry name" value="Glyco_hydro_3_AS"/>
</dbReference>
<dbReference type="InterPro" id="IPR001764">
    <property type="entry name" value="Glyco_hydro_3_N"/>
</dbReference>
<dbReference type="InterPro" id="IPR036962">
    <property type="entry name" value="Glyco_hydro_3_N_sf"/>
</dbReference>
<dbReference type="InterPro" id="IPR017853">
    <property type="entry name" value="Glycoside_hydrolase_SF"/>
</dbReference>
<dbReference type="InterPro" id="IPR050226">
    <property type="entry name" value="NagZ_Beta-hexosaminidase"/>
</dbReference>
<dbReference type="NCBIfam" id="NF003740">
    <property type="entry name" value="PRK05337.1"/>
    <property type="match status" value="1"/>
</dbReference>
<dbReference type="PANTHER" id="PTHR30480:SF13">
    <property type="entry name" value="BETA-HEXOSAMINIDASE"/>
    <property type="match status" value="1"/>
</dbReference>
<dbReference type="PANTHER" id="PTHR30480">
    <property type="entry name" value="BETA-HEXOSAMINIDASE-RELATED"/>
    <property type="match status" value="1"/>
</dbReference>
<dbReference type="Pfam" id="PF00933">
    <property type="entry name" value="Glyco_hydro_3"/>
    <property type="match status" value="1"/>
</dbReference>
<dbReference type="SUPFAM" id="SSF51445">
    <property type="entry name" value="(Trans)glycosidases"/>
    <property type="match status" value="1"/>
</dbReference>
<dbReference type="PROSITE" id="PS00775">
    <property type="entry name" value="GLYCOSYL_HYDROL_F3"/>
    <property type="match status" value="1"/>
</dbReference>
<proteinExistence type="inferred from homology"/>
<organism>
    <name type="scientific">Pectobacterium carotovorum subsp. carotovorum (strain PC1)</name>
    <dbReference type="NCBI Taxonomy" id="561230"/>
    <lineage>
        <taxon>Bacteria</taxon>
        <taxon>Pseudomonadati</taxon>
        <taxon>Pseudomonadota</taxon>
        <taxon>Gammaproteobacteria</taxon>
        <taxon>Enterobacterales</taxon>
        <taxon>Pectobacteriaceae</taxon>
        <taxon>Pectobacterium</taxon>
    </lineage>
</organism>
<keyword id="KW-0131">Cell cycle</keyword>
<keyword id="KW-0132">Cell division</keyword>
<keyword id="KW-0133">Cell shape</keyword>
<keyword id="KW-0961">Cell wall biogenesis/degradation</keyword>
<keyword id="KW-0963">Cytoplasm</keyword>
<keyword id="KW-0326">Glycosidase</keyword>
<keyword id="KW-0378">Hydrolase</keyword>
<keyword id="KW-0573">Peptidoglycan synthesis</keyword>
<name>NAGZ_PECCP</name>
<comment type="function">
    <text evidence="1">Plays a role in peptidoglycan recycling by cleaving the terminal beta-1,4-linked N-acetylglucosamine (GlcNAc) from peptide-linked peptidoglycan fragments, giving rise to free GlcNAc, anhydro-N-acetylmuramic acid and anhydro-N-acetylmuramic acid-linked peptides.</text>
</comment>
<comment type="catalytic activity">
    <reaction evidence="1">
        <text>Hydrolysis of terminal non-reducing N-acetyl-D-hexosamine residues in N-acetyl-beta-D-hexosaminides.</text>
        <dbReference type="EC" id="3.2.1.52"/>
    </reaction>
</comment>
<comment type="pathway">
    <text evidence="1">Cell wall biogenesis; peptidoglycan recycling.</text>
</comment>
<comment type="subcellular location">
    <subcellularLocation>
        <location evidence="1">Cytoplasm</location>
    </subcellularLocation>
</comment>
<comment type="similarity">
    <text evidence="1">Belongs to the glycosyl hydrolase 3 family. NagZ subfamily.</text>
</comment>
<protein>
    <recommendedName>
        <fullName evidence="1">Beta-hexosaminidase</fullName>
        <ecNumber evidence="1">3.2.1.52</ecNumber>
    </recommendedName>
    <alternativeName>
        <fullName evidence="1">Beta-N-acetylhexosaminidase</fullName>
    </alternativeName>
    <alternativeName>
        <fullName evidence="1">N-acetyl-beta-glucosaminidase</fullName>
    </alternativeName>
</protein>
<reference key="1">
    <citation type="submission" date="2009-07" db="EMBL/GenBank/DDBJ databases">
        <title>Complete sequence of Pectobacterium carotovorum subsp. carotovorum PC1.</title>
        <authorList>
            <consortium name="US DOE Joint Genome Institute"/>
            <person name="Lucas S."/>
            <person name="Copeland A."/>
            <person name="Lapidus A."/>
            <person name="Glavina del Rio T."/>
            <person name="Tice H."/>
            <person name="Bruce D."/>
            <person name="Goodwin L."/>
            <person name="Pitluck S."/>
            <person name="Munk A.C."/>
            <person name="Brettin T."/>
            <person name="Detter J.C."/>
            <person name="Han C."/>
            <person name="Tapia R."/>
            <person name="Larimer F."/>
            <person name="Land M."/>
            <person name="Hauser L."/>
            <person name="Kyrpides N."/>
            <person name="Mikhailova N."/>
            <person name="Balakrishnan V."/>
            <person name="Glasner J."/>
            <person name="Perna N.T."/>
        </authorList>
    </citation>
    <scope>NUCLEOTIDE SEQUENCE [LARGE SCALE GENOMIC DNA]</scope>
    <source>
        <strain>PC1</strain>
    </source>
</reference>
<evidence type="ECO:0000255" key="1">
    <source>
        <dbReference type="HAMAP-Rule" id="MF_00364"/>
    </source>
</evidence>
<sequence length="342" mass="37780">MGPVMLDVASYELDAEDREVLEHPLVGGVILFTRNFHDAAQLRELVRQIRAASRERLVVSVDQEGGRVQRFRDGFTRLPAAQAFAALNSEPEALRLAEEGGWLMAAEMISMDIDISFAPVLDIGHQSAAIGERSFHANPETALAVAQSFIRGMHSAGMKVTGKHFPGHGAVSADSHKETPRDPRPLAEIRAHDMLIFKALIQRQQLDAIMPAHVIYTEADPRPASGSPYWLKTVLREELGFDGIIFSDDLSMEGAAVMGSYPERAQATLQAGCDMILVCNHREGAVSVLDNLSPVKAEQLTRLYHQGSFSRRELLDSPRWKLANQALTSLSERWQAHKNGEK</sequence>